<sequence length="111" mass="12331">MPKIVILPHQDLCPDGAVLEANSGETILDAALRNGIEIEHACEKSCACTTCHCIVREGFDSLPESSEQEDDMLDKAWGLEPESRLSCQARVTDEDLVVEIPRYTINHAREH</sequence>
<protein>
    <recommendedName>
        <fullName>2Fe-2S ferredoxin</fullName>
    </recommendedName>
</protein>
<accession>P0A9R4</accession>
<accession>P25528</accession>
<feature type="initiator methionine" description="Removed" evidence="2 3">
    <location>
        <position position="1"/>
    </location>
</feature>
<feature type="chain" id="PRO_0000201168" description="2Fe-2S ferredoxin">
    <location>
        <begin position="2"/>
        <end position="111"/>
    </location>
</feature>
<feature type="domain" description="2Fe-2S ferredoxin-type" evidence="1">
    <location>
        <begin position="2"/>
        <end position="104"/>
    </location>
</feature>
<feature type="binding site">
    <location>
        <position position="42"/>
    </location>
    <ligand>
        <name>[2Fe-2S] cluster</name>
        <dbReference type="ChEBI" id="CHEBI:190135"/>
    </ligand>
</feature>
<feature type="binding site">
    <location>
        <position position="48"/>
    </location>
    <ligand>
        <name>[2Fe-2S] cluster</name>
        <dbReference type="ChEBI" id="CHEBI:190135"/>
    </ligand>
</feature>
<feature type="binding site">
    <location>
        <position position="51"/>
    </location>
    <ligand>
        <name>[2Fe-2S] cluster</name>
        <dbReference type="ChEBI" id="CHEBI:190135"/>
    </ligand>
</feature>
<feature type="binding site">
    <location>
        <position position="87"/>
    </location>
    <ligand>
        <name>[2Fe-2S] cluster</name>
        <dbReference type="ChEBI" id="CHEBI:190135"/>
    </ligand>
</feature>
<feature type="sequence conflict" description="In Ref. 6; AA sequence." evidence="4" ref="6">
    <original>P</original>
    <variation>Y</variation>
    <location>
        <position position="8"/>
    </location>
</feature>
<feature type="sequence conflict" description="In Ref. 2; U01827." evidence="4" ref="2">
    <original>P</original>
    <variation>Q</variation>
    <location>
        <position position="63"/>
    </location>
</feature>
<feature type="sequence conflict" description="In Ref. 2; U01827." evidence="4" ref="2">
    <original>QE</original>
    <variation>HQ</variation>
    <location>
        <begin position="68"/>
        <end position="69"/>
    </location>
</feature>
<feature type="sequence conflict" description="In Ref. 2; U01827." evidence="4" ref="2">
    <original>D</original>
    <variation>N</variation>
    <location>
        <position position="74"/>
    </location>
</feature>
<feature type="sequence conflict" description="In Ref. 2; U01827." evidence="4" ref="2">
    <original>W</original>
    <variation>R</variation>
    <location>
        <position position="77"/>
    </location>
</feature>
<feature type="sequence conflict" description="In Ref. 2; U01827." evidence="4" ref="2">
    <original>VTD</original>
    <variation>SYH</variation>
    <location>
        <begin position="91"/>
        <end position="93"/>
    </location>
</feature>
<feature type="strand" evidence="5">
    <location>
        <begin position="3"/>
        <end position="6"/>
    </location>
</feature>
<feature type="turn" evidence="5">
    <location>
        <begin position="10"/>
        <end position="12"/>
    </location>
</feature>
<feature type="strand" evidence="5">
    <location>
        <begin position="17"/>
        <end position="20"/>
    </location>
</feature>
<feature type="helix" evidence="5">
    <location>
        <begin position="27"/>
        <end position="33"/>
    </location>
</feature>
<feature type="strand" evidence="5">
    <location>
        <begin position="43"/>
        <end position="46"/>
    </location>
</feature>
<feature type="strand" evidence="5">
    <location>
        <begin position="52"/>
        <end position="57"/>
    </location>
</feature>
<feature type="helix" evidence="5">
    <location>
        <begin position="59"/>
        <end position="61"/>
    </location>
</feature>
<feature type="helix" evidence="5">
    <location>
        <begin position="67"/>
        <end position="73"/>
    </location>
</feature>
<feature type="strand" evidence="5">
    <location>
        <begin position="83"/>
        <end position="85"/>
    </location>
</feature>
<feature type="turn" evidence="5">
    <location>
        <begin position="86"/>
        <end position="88"/>
    </location>
</feature>
<feature type="strand" evidence="5">
    <location>
        <begin position="96"/>
        <end position="99"/>
    </location>
</feature>
<proteinExistence type="evidence at protein level"/>
<dbReference type="EMBL" id="M88654">
    <property type="protein sequence ID" value="AAA23755.1"/>
    <property type="molecule type" value="Genomic_DNA"/>
</dbReference>
<dbReference type="EMBL" id="U05338">
    <property type="protein sequence ID" value="AAD13474.1"/>
    <property type="molecule type" value="Genomic_DNA"/>
</dbReference>
<dbReference type="EMBL" id="U01827">
    <property type="status" value="NOT_ANNOTATED_CDS"/>
    <property type="molecule type" value="Unassigned_DNA"/>
</dbReference>
<dbReference type="EMBL" id="U00096">
    <property type="protein sequence ID" value="AAC75578.1"/>
    <property type="molecule type" value="Genomic_DNA"/>
</dbReference>
<dbReference type="EMBL" id="AP009048">
    <property type="protein sequence ID" value="BAA16415.1"/>
    <property type="molecule type" value="Genomic_DNA"/>
</dbReference>
<dbReference type="PIR" id="JC1110">
    <property type="entry name" value="JC1110"/>
</dbReference>
<dbReference type="RefSeq" id="NP_417020.1">
    <property type="nucleotide sequence ID" value="NC_000913.3"/>
</dbReference>
<dbReference type="RefSeq" id="WP_001124469.1">
    <property type="nucleotide sequence ID" value="NZ_STEB01000011.1"/>
</dbReference>
<dbReference type="PDB" id="1I7H">
    <property type="method" value="X-ray"/>
    <property type="resolution" value="1.70 A"/>
    <property type="chains" value="A/B/C=1-111"/>
</dbReference>
<dbReference type="PDBsum" id="1I7H"/>
<dbReference type="BMRB" id="P0A9R4"/>
<dbReference type="SMR" id="P0A9R4"/>
<dbReference type="BioGRID" id="4260584">
    <property type="interactions" value="62"/>
</dbReference>
<dbReference type="BioGRID" id="851492">
    <property type="interactions" value="4"/>
</dbReference>
<dbReference type="DIP" id="DIP-48512N"/>
<dbReference type="FunCoup" id="P0A9R4">
    <property type="interactions" value="443"/>
</dbReference>
<dbReference type="IntAct" id="P0A9R4">
    <property type="interactions" value="14"/>
</dbReference>
<dbReference type="STRING" id="511145.b2525"/>
<dbReference type="jPOST" id="P0A9R4"/>
<dbReference type="PaxDb" id="511145-b2525"/>
<dbReference type="EnsemblBacteria" id="AAC75578">
    <property type="protein sequence ID" value="AAC75578"/>
    <property type="gene ID" value="b2525"/>
</dbReference>
<dbReference type="GeneID" id="93774611"/>
<dbReference type="GeneID" id="947160"/>
<dbReference type="KEGG" id="ecj:JW2509"/>
<dbReference type="KEGG" id="eco:b2525"/>
<dbReference type="KEGG" id="ecoc:C3026_13995"/>
<dbReference type="PATRIC" id="fig|1411691.4.peg.4209"/>
<dbReference type="EchoBASE" id="EB1304"/>
<dbReference type="eggNOG" id="COG0633">
    <property type="taxonomic scope" value="Bacteria"/>
</dbReference>
<dbReference type="HOGENOM" id="CLU_082632_5_2_6"/>
<dbReference type="InParanoid" id="P0A9R4"/>
<dbReference type="OMA" id="TCHCIIR"/>
<dbReference type="OrthoDB" id="9793027at2"/>
<dbReference type="PhylomeDB" id="P0A9R4"/>
<dbReference type="BioCyc" id="EcoCyc:FERREDOXIN-MONOMER"/>
<dbReference type="BioCyc" id="MetaCyc:FERREDOXIN-MONOMER"/>
<dbReference type="EvolutionaryTrace" id="P0A9R4"/>
<dbReference type="PRO" id="PR:P0A9R4"/>
<dbReference type="Proteomes" id="UP000000625">
    <property type="component" value="Chromosome"/>
</dbReference>
<dbReference type="GO" id="GO:0005829">
    <property type="term" value="C:cytosol"/>
    <property type="evidence" value="ECO:0000314"/>
    <property type="project" value="EcoCyc"/>
</dbReference>
<dbReference type="GO" id="GO:0051537">
    <property type="term" value="F:2 iron, 2 sulfur cluster binding"/>
    <property type="evidence" value="ECO:0000314"/>
    <property type="project" value="EcoCyc"/>
</dbReference>
<dbReference type="GO" id="GO:0009055">
    <property type="term" value="F:electron transfer activity"/>
    <property type="evidence" value="ECO:0000314"/>
    <property type="project" value="EcoCyc"/>
</dbReference>
<dbReference type="GO" id="GO:0046872">
    <property type="term" value="F:metal ion binding"/>
    <property type="evidence" value="ECO:0007669"/>
    <property type="project" value="UniProtKB-KW"/>
</dbReference>
<dbReference type="GO" id="GO:0022900">
    <property type="term" value="P:electron transport chain"/>
    <property type="evidence" value="ECO:0000318"/>
    <property type="project" value="GO_Central"/>
</dbReference>
<dbReference type="GO" id="GO:0016226">
    <property type="term" value="P:iron-sulfur cluster assembly"/>
    <property type="evidence" value="ECO:0000315"/>
    <property type="project" value="EcoCyc"/>
</dbReference>
<dbReference type="GO" id="GO:0140647">
    <property type="term" value="P:P450-containing electron transport chain"/>
    <property type="evidence" value="ECO:0007669"/>
    <property type="project" value="InterPro"/>
</dbReference>
<dbReference type="CDD" id="cd00207">
    <property type="entry name" value="fer2"/>
    <property type="match status" value="1"/>
</dbReference>
<dbReference type="FunFam" id="3.10.20.30:FF:000008">
    <property type="entry name" value="Ferredoxin, 2Fe-2S type, ISC system"/>
    <property type="match status" value="1"/>
</dbReference>
<dbReference type="Gene3D" id="3.10.20.30">
    <property type="match status" value="1"/>
</dbReference>
<dbReference type="InterPro" id="IPR036010">
    <property type="entry name" value="2Fe-2S_ferredoxin-like_sf"/>
</dbReference>
<dbReference type="InterPro" id="IPR001041">
    <property type="entry name" value="2Fe-2S_ferredoxin-type"/>
</dbReference>
<dbReference type="InterPro" id="IPR001055">
    <property type="entry name" value="Adrenodoxin-like"/>
</dbReference>
<dbReference type="InterPro" id="IPR018298">
    <property type="entry name" value="Adrenodoxin_Fe-S_BS"/>
</dbReference>
<dbReference type="InterPro" id="IPR012675">
    <property type="entry name" value="Beta-grasp_dom_sf"/>
</dbReference>
<dbReference type="InterPro" id="IPR011536">
    <property type="entry name" value="Fdx_isc"/>
</dbReference>
<dbReference type="NCBIfam" id="TIGR02007">
    <property type="entry name" value="fdx_isc"/>
    <property type="match status" value="1"/>
</dbReference>
<dbReference type="PANTHER" id="PTHR23426:SF65">
    <property type="entry name" value="FERREDOXIN-2, MITOCHONDRIAL"/>
    <property type="match status" value="1"/>
</dbReference>
<dbReference type="PANTHER" id="PTHR23426">
    <property type="entry name" value="FERREDOXIN/ADRENODOXIN"/>
    <property type="match status" value="1"/>
</dbReference>
<dbReference type="Pfam" id="PF00111">
    <property type="entry name" value="Fer2"/>
    <property type="match status" value="1"/>
</dbReference>
<dbReference type="PRINTS" id="PR00355">
    <property type="entry name" value="ADRENODOXIN"/>
</dbReference>
<dbReference type="SUPFAM" id="SSF54292">
    <property type="entry name" value="2Fe-2S ferredoxin-like"/>
    <property type="match status" value="1"/>
</dbReference>
<dbReference type="PROSITE" id="PS51085">
    <property type="entry name" value="2FE2S_FER_2"/>
    <property type="match status" value="1"/>
</dbReference>
<dbReference type="PROSITE" id="PS00814">
    <property type="entry name" value="ADX"/>
    <property type="match status" value="1"/>
</dbReference>
<evidence type="ECO:0000255" key="1">
    <source>
        <dbReference type="PROSITE-ProRule" id="PRU00465"/>
    </source>
</evidence>
<evidence type="ECO:0000269" key="2">
    <source>
    </source>
</evidence>
<evidence type="ECO:0000269" key="3">
    <source>
    </source>
</evidence>
<evidence type="ECO:0000305" key="4"/>
<evidence type="ECO:0007829" key="5">
    <source>
        <dbReference type="PDB" id="1I7H"/>
    </source>
</evidence>
<comment type="function">
    <text>Ferredoxin are iron-sulfur proteins that transfer electrons in a wide variety of metabolic reactions. Although the function of this ferredoxin is unknown it is probable that it has a role as a cellular electron transfer protein. Involved in the in vivo assembly of the Fe-S clusters in a wide variety of iron-sulfur proteins.</text>
</comment>
<comment type="cofactor">
    <cofactor>
        <name>[2Fe-2S] cluster</name>
        <dbReference type="ChEBI" id="CHEBI:190135"/>
    </cofactor>
    <text>Binds 1 [2Fe-2S] cluster.</text>
</comment>
<comment type="interaction">
    <interactant intactId="EBI-767037">
        <id>P0A9R4</id>
    </interactant>
    <interactant intactId="EBI-767026">
        <id>P0AAC8</id>
        <label>iscA</label>
    </interactant>
    <organismsDiffer>false</organismsDiffer>
    <experiments>4</experiments>
</comment>
<comment type="interaction">
    <interactant intactId="EBI-767037">
        <id>P0A9R4</id>
    </interactant>
    <interactant intactId="EBI-550055">
        <id>P0A6B7</id>
        <label>iscS</label>
    </interactant>
    <organismsDiffer>false</organismsDiffer>
    <experiments>2</experiments>
</comment>
<comment type="similarity">
    <text evidence="4">Belongs to the adrenodoxin/putidaredoxin family.</text>
</comment>
<keyword id="KW-0001">2Fe-2S</keyword>
<keyword id="KW-0002">3D-structure</keyword>
<keyword id="KW-0903">Direct protein sequencing</keyword>
<keyword id="KW-0249">Electron transport</keyword>
<keyword id="KW-0408">Iron</keyword>
<keyword id="KW-0411">Iron-sulfur</keyword>
<keyword id="KW-0479">Metal-binding</keyword>
<keyword id="KW-1185">Reference proteome</keyword>
<keyword id="KW-0813">Transport</keyword>
<organism>
    <name type="scientific">Escherichia coli (strain K12)</name>
    <dbReference type="NCBI Taxonomy" id="83333"/>
    <lineage>
        <taxon>Bacteria</taxon>
        <taxon>Pseudomonadati</taxon>
        <taxon>Pseudomonadota</taxon>
        <taxon>Gammaproteobacteria</taxon>
        <taxon>Enterobacterales</taxon>
        <taxon>Enterobacteriaceae</taxon>
        <taxon>Escherichia</taxon>
    </lineage>
</organism>
<gene>
    <name type="primary">fdx</name>
    <name type="ordered locus">b2525</name>
    <name type="ordered locus">JW2509</name>
</gene>
<name>FER_ECOLI</name>
<reference key="1">
    <citation type="journal article" date="1992" name="J. Biol. Chem.">
        <title>Cloning, sequencing, and overexpression of a [2Fe-2S] ferredoxin gene from Escherichia coli.</title>
        <authorList>
            <person name="Ta D.T."/>
            <person name="Vickery L.E."/>
        </authorList>
    </citation>
    <scope>NUCLEOTIDE SEQUENCE [GENOMIC DNA]</scope>
    <scope>PROTEIN SEQUENCE OF 2-11</scope>
    <source>
        <strain>K12</strain>
    </source>
</reference>
<reference key="2">
    <citation type="journal article" date="1994" name="J. Bacteriol.">
        <title>Mutations in a gene encoding a new Hsp70 suppress rapid DNA inversion and bgl activation, but not proU derepression, in hns-1 mutant Escherichia coli.</title>
        <authorList>
            <person name="Kawula T.H."/>
            <person name="Lelivelt M.J."/>
        </authorList>
    </citation>
    <scope>NUCLEOTIDE SEQUENCE [GENOMIC DNA]</scope>
    <source>
        <strain>K12</strain>
    </source>
</reference>
<reference key="3">
    <citation type="journal article" date="1997" name="DNA Res.">
        <title>Construction of a contiguous 874-kb sequence of the Escherichia coli-K12 genome corresponding to 50.0-68.8 min on the linkage map and analysis of its sequence features.</title>
        <authorList>
            <person name="Yamamoto Y."/>
            <person name="Aiba H."/>
            <person name="Baba T."/>
            <person name="Hayashi K."/>
            <person name="Inada T."/>
            <person name="Isono K."/>
            <person name="Itoh T."/>
            <person name="Kimura S."/>
            <person name="Kitagawa M."/>
            <person name="Makino K."/>
            <person name="Miki T."/>
            <person name="Mitsuhashi N."/>
            <person name="Mizobuchi K."/>
            <person name="Mori H."/>
            <person name="Nakade S."/>
            <person name="Nakamura Y."/>
            <person name="Nashimoto H."/>
            <person name="Oshima T."/>
            <person name="Oyama S."/>
            <person name="Saito N."/>
            <person name="Sampei G."/>
            <person name="Satoh Y."/>
            <person name="Sivasundaram S."/>
            <person name="Tagami H."/>
            <person name="Takahashi H."/>
            <person name="Takeda J."/>
            <person name="Takemoto K."/>
            <person name="Uehara K."/>
            <person name="Wada C."/>
            <person name="Yamagata S."/>
            <person name="Horiuchi T."/>
        </authorList>
    </citation>
    <scope>NUCLEOTIDE SEQUENCE [LARGE SCALE GENOMIC DNA]</scope>
    <source>
        <strain>K12 / W3110 / ATCC 27325 / DSM 5911</strain>
    </source>
</reference>
<reference key="4">
    <citation type="journal article" date="1997" name="Science">
        <title>The complete genome sequence of Escherichia coli K-12.</title>
        <authorList>
            <person name="Blattner F.R."/>
            <person name="Plunkett G. III"/>
            <person name="Bloch C.A."/>
            <person name="Perna N.T."/>
            <person name="Burland V."/>
            <person name="Riley M."/>
            <person name="Collado-Vides J."/>
            <person name="Glasner J.D."/>
            <person name="Rode C.K."/>
            <person name="Mayhew G.F."/>
            <person name="Gregor J."/>
            <person name="Davis N.W."/>
            <person name="Kirkpatrick H.A."/>
            <person name="Goeden M.A."/>
            <person name="Rose D.J."/>
            <person name="Mau B."/>
            <person name="Shao Y."/>
        </authorList>
    </citation>
    <scope>NUCLEOTIDE SEQUENCE [LARGE SCALE GENOMIC DNA]</scope>
    <source>
        <strain>K12 / MG1655 / ATCC 47076</strain>
    </source>
</reference>
<reference key="5">
    <citation type="journal article" date="2006" name="Mol. Syst. Biol.">
        <title>Highly accurate genome sequences of Escherichia coli K-12 strains MG1655 and W3110.</title>
        <authorList>
            <person name="Hayashi K."/>
            <person name="Morooka N."/>
            <person name="Yamamoto Y."/>
            <person name="Fujita K."/>
            <person name="Isono K."/>
            <person name="Choi S."/>
            <person name="Ohtsubo E."/>
            <person name="Baba T."/>
            <person name="Wanner B.L."/>
            <person name="Mori H."/>
            <person name="Horiuchi T."/>
        </authorList>
    </citation>
    <scope>NUCLEOTIDE SEQUENCE [LARGE SCALE GENOMIC DNA]</scope>
    <source>
        <strain>K12 / W3110 / ATCC 27325 / DSM 5911</strain>
    </source>
</reference>
<reference key="6">
    <citation type="journal article" date="1974" name="Eur. J. Biochem.">
        <title>Escherichia coli ferredoxin, an iron-sulfur protein of the adrenodoxin type.</title>
        <authorList>
            <person name="Knoell H.-E."/>
            <person name="Knappe J."/>
        </authorList>
    </citation>
    <scope>PROTEIN SEQUENCE OF 2-8</scope>
</reference>
<reference key="7">
    <citation type="journal article" date="1999" name="J. Biochem.">
        <title>Hyperproduction of recombinant ferredoxins in Escherichia coli by coexpression of the ORF1-ORF2-iscS-iscU-iscA-hscB-hscA-fdx-ORF3 gene cluster.</title>
        <authorList>
            <person name="Nakamura M."/>
            <person name="Saeki K."/>
            <person name="Takahashi Y."/>
        </authorList>
    </citation>
    <scope>GENETIC CHARACTERIZATION</scope>
</reference>
<reference key="8">
    <citation type="journal article" date="2001" name="Biochemistry">
        <title>Crystal structure of Escherichia coli Fdx, an adrenodoxin-type ferredoxin involved in the assembly of iron-sulfur clusters.</title>
        <authorList>
            <person name="Kakuta Y."/>
            <person name="Horio T."/>
            <person name="Takahashi Y."/>
            <person name="Fukuyama K."/>
        </authorList>
    </citation>
    <scope>X-RAY CRYSTALLOGRAPHY (1.7 ANGSTROMS)</scope>
</reference>